<evidence type="ECO:0000255" key="1">
    <source>
        <dbReference type="HAMAP-Rule" id="MF_00181"/>
    </source>
</evidence>
<dbReference type="EC" id="3.4.11.1" evidence="1"/>
<dbReference type="EC" id="3.4.11.10" evidence="1"/>
<dbReference type="EMBL" id="CP000946">
    <property type="protein sequence ID" value="ACA79359.1"/>
    <property type="molecule type" value="Genomic_DNA"/>
</dbReference>
<dbReference type="RefSeq" id="WP_000397144.1">
    <property type="nucleotide sequence ID" value="NZ_MTFT01000012.1"/>
</dbReference>
<dbReference type="SMR" id="B1ISB1"/>
<dbReference type="MEROPS" id="M17.003"/>
<dbReference type="GeneID" id="93777558"/>
<dbReference type="KEGG" id="ecl:EcolC_3752"/>
<dbReference type="HOGENOM" id="CLU_013734_2_2_6"/>
<dbReference type="GO" id="GO:0005737">
    <property type="term" value="C:cytoplasm"/>
    <property type="evidence" value="ECO:0007669"/>
    <property type="project" value="UniProtKB-SubCell"/>
</dbReference>
<dbReference type="GO" id="GO:0030145">
    <property type="term" value="F:manganese ion binding"/>
    <property type="evidence" value="ECO:0007669"/>
    <property type="project" value="UniProtKB-UniRule"/>
</dbReference>
<dbReference type="GO" id="GO:0070006">
    <property type="term" value="F:metalloaminopeptidase activity"/>
    <property type="evidence" value="ECO:0007669"/>
    <property type="project" value="InterPro"/>
</dbReference>
<dbReference type="GO" id="GO:0006508">
    <property type="term" value="P:proteolysis"/>
    <property type="evidence" value="ECO:0007669"/>
    <property type="project" value="UniProtKB-KW"/>
</dbReference>
<dbReference type="CDD" id="cd00433">
    <property type="entry name" value="Peptidase_M17"/>
    <property type="match status" value="1"/>
</dbReference>
<dbReference type="FunFam" id="3.40.220.10:FF:000001">
    <property type="entry name" value="Probable cytosol aminopeptidase"/>
    <property type="match status" value="1"/>
</dbReference>
<dbReference type="FunFam" id="3.40.630.10:FF:000004">
    <property type="entry name" value="Probable cytosol aminopeptidase"/>
    <property type="match status" value="1"/>
</dbReference>
<dbReference type="Gene3D" id="3.40.220.10">
    <property type="entry name" value="Leucine Aminopeptidase, subunit E, domain 1"/>
    <property type="match status" value="1"/>
</dbReference>
<dbReference type="Gene3D" id="3.40.630.10">
    <property type="entry name" value="Zn peptidases"/>
    <property type="match status" value="1"/>
</dbReference>
<dbReference type="HAMAP" id="MF_00181">
    <property type="entry name" value="Cytosol_peptidase_M17"/>
    <property type="match status" value="1"/>
</dbReference>
<dbReference type="InterPro" id="IPR011356">
    <property type="entry name" value="Leucine_aapep/pepB"/>
</dbReference>
<dbReference type="InterPro" id="IPR043472">
    <property type="entry name" value="Macro_dom-like"/>
</dbReference>
<dbReference type="InterPro" id="IPR000819">
    <property type="entry name" value="Peptidase_M17_C"/>
</dbReference>
<dbReference type="InterPro" id="IPR023042">
    <property type="entry name" value="Peptidase_M17_leu_NH2_pept"/>
</dbReference>
<dbReference type="InterPro" id="IPR008283">
    <property type="entry name" value="Peptidase_M17_N"/>
</dbReference>
<dbReference type="NCBIfam" id="NF002072">
    <property type="entry name" value="PRK00913.1-1"/>
    <property type="match status" value="1"/>
</dbReference>
<dbReference type="NCBIfam" id="NF002073">
    <property type="entry name" value="PRK00913.1-2"/>
    <property type="match status" value="1"/>
</dbReference>
<dbReference type="NCBIfam" id="NF002074">
    <property type="entry name" value="PRK00913.1-4"/>
    <property type="match status" value="1"/>
</dbReference>
<dbReference type="PANTHER" id="PTHR11963:SF23">
    <property type="entry name" value="CYTOSOL AMINOPEPTIDASE"/>
    <property type="match status" value="1"/>
</dbReference>
<dbReference type="PANTHER" id="PTHR11963">
    <property type="entry name" value="LEUCINE AMINOPEPTIDASE-RELATED"/>
    <property type="match status" value="1"/>
</dbReference>
<dbReference type="Pfam" id="PF00883">
    <property type="entry name" value="Peptidase_M17"/>
    <property type="match status" value="1"/>
</dbReference>
<dbReference type="Pfam" id="PF02789">
    <property type="entry name" value="Peptidase_M17_N"/>
    <property type="match status" value="1"/>
</dbReference>
<dbReference type="PRINTS" id="PR00481">
    <property type="entry name" value="LAMNOPPTDASE"/>
</dbReference>
<dbReference type="SUPFAM" id="SSF52949">
    <property type="entry name" value="Macro domain-like"/>
    <property type="match status" value="1"/>
</dbReference>
<dbReference type="SUPFAM" id="SSF53187">
    <property type="entry name" value="Zn-dependent exopeptidases"/>
    <property type="match status" value="1"/>
</dbReference>
<dbReference type="PROSITE" id="PS00631">
    <property type="entry name" value="CYTOSOL_AP"/>
    <property type="match status" value="1"/>
</dbReference>
<name>AMPA_ECOLC</name>
<organism>
    <name type="scientific">Escherichia coli (strain ATCC 8739 / DSM 1576 / NBRC 3972 / NCIMB 8545 / WDCM 00012 / Crooks)</name>
    <dbReference type="NCBI Taxonomy" id="481805"/>
    <lineage>
        <taxon>Bacteria</taxon>
        <taxon>Pseudomonadati</taxon>
        <taxon>Pseudomonadota</taxon>
        <taxon>Gammaproteobacteria</taxon>
        <taxon>Enterobacterales</taxon>
        <taxon>Enterobacteriaceae</taxon>
        <taxon>Escherichia</taxon>
    </lineage>
</organism>
<protein>
    <recommendedName>
        <fullName evidence="1">Probable cytosol aminopeptidase</fullName>
        <ecNumber evidence="1">3.4.11.1</ecNumber>
    </recommendedName>
    <alternativeName>
        <fullName evidence="1">Leucine aminopeptidase</fullName>
        <shortName evidence="1">LAP</shortName>
        <ecNumber evidence="1">3.4.11.10</ecNumber>
    </alternativeName>
    <alternativeName>
        <fullName evidence="1">Leucyl aminopeptidase</fullName>
    </alternativeName>
</protein>
<reference key="1">
    <citation type="submission" date="2008-02" db="EMBL/GenBank/DDBJ databases">
        <title>Complete sequence of Escherichia coli C str. ATCC 8739.</title>
        <authorList>
            <person name="Copeland A."/>
            <person name="Lucas S."/>
            <person name="Lapidus A."/>
            <person name="Glavina del Rio T."/>
            <person name="Dalin E."/>
            <person name="Tice H."/>
            <person name="Bruce D."/>
            <person name="Goodwin L."/>
            <person name="Pitluck S."/>
            <person name="Kiss H."/>
            <person name="Brettin T."/>
            <person name="Detter J.C."/>
            <person name="Han C."/>
            <person name="Kuske C.R."/>
            <person name="Schmutz J."/>
            <person name="Larimer F."/>
            <person name="Land M."/>
            <person name="Hauser L."/>
            <person name="Kyrpides N."/>
            <person name="Mikhailova N."/>
            <person name="Ingram L."/>
            <person name="Richardson P."/>
        </authorList>
    </citation>
    <scope>NUCLEOTIDE SEQUENCE [LARGE SCALE GENOMIC DNA]</scope>
    <source>
        <strain>ATCC 8739 / DSM 1576 / NBRC 3972 / NCIMB 8545 / WDCM 00012 / Crooks</strain>
    </source>
</reference>
<keyword id="KW-0031">Aminopeptidase</keyword>
<keyword id="KW-0963">Cytoplasm</keyword>
<keyword id="KW-0378">Hydrolase</keyword>
<keyword id="KW-0464">Manganese</keyword>
<keyword id="KW-0479">Metal-binding</keyword>
<keyword id="KW-0645">Protease</keyword>
<sequence>MEFSVKSGSPEKQRSACIVVGVFEPRRLSPIAEQLDKISDGYISALLRRGELEGKPGQTLLLHHVPNVLSERILLIGCGKERELDERQYKQVIQKTINTLNDTGSMEAVCFLTELHVKGRNNYWKVRQAVETAKETLYSFDQLKTNKSEPRRPLRKMVFNVPTRRELTSGERAIQHGLAIAAGIKAAKDLGNMPPNICNAAYLASQARQLADSYSKNVITRVIGEQQMKELGMHSYLAVGQGSQNESLMSVIEYKGNASEDARPIVLVGKGLTFDSGGISIKPSEGMDEMKYDMCGAAAVYGVMRMVAELQLPINVIGVLAGCENMPGGRAYRPGDVLTTMSGQTVEVLNTDAEGRLVLCDVLTYVERFEPEAVIDVATLTGACVIALGHHITGLMANHNPLAHELIAASEQSGDRAWRLPLGDEYQEQLESNFADMANIGGRPGGAITAGCFLSRFTRKYNWAHLDIAGTAWRSGKAKGATGRPVALLAQFLLNRAGFNGEE</sequence>
<accession>B1ISB1</accession>
<proteinExistence type="inferred from homology"/>
<comment type="function">
    <text evidence="1">Presumably involved in the processing and regular turnover of intracellular proteins. Catalyzes the removal of unsubstituted N-terminal amino acids from various peptides.</text>
</comment>
<comment type="catalytic activity">
    <reaction evidence="1">
        <text>Release of an N-terminal amino acid, Xaa-|-Yaa-, in which Xaa is preferably Leu, but may be other amino acids including Pro although not Arg or Lys, and Yaa may be Pro. Amino acid amides and methyl esters are also readily hydrolyzed, but rates on arylamides are exceedingly low.</text>
        <dbReference type="EC" id="3.4.11.1"/>
    </reaction>
</comment>
<comment type="catalytic activity">
    <reaction evidence="1">
        <text>Release of an N-terminal amino acid, preferentially leucine, but not glutamic or aspartic acids.</text>
        <dbReference type="EC" id="3.4.11.10"/>
    </reaction>
</comment>
<comment type="cofactor">
    <cofactor evidence="1">
        <name>Mn(2+)</name>
        <dbReference type="ChEBI" id="CHEBI:29035"/>
    </cofactor>
    <text evidence="1">Binds 2 manganese ions per subunit.</text>
</comment>
<comment type="subcellular location">
    <subcellularLocation>
        <location evidence="1">Cytoplasm</location>
    </subcellularLocation>
</comment>
<comment type="similarity">
    <text evidence="1">Belongs to the peptidase M17 family.</text>
</comment>
<feature type="chain" id="PRO_1000077275" description="Probable cytosol aminopeptidase">
    <location>
        <begin position="1"/>
        <end position="503"/>
    </location>
</feature>
<feature type="active site" evidence="1">
    <location>
        <position position="282"/>
    </location>
</feature>
<feature type="active site" evidence="1">
    <location>
        <position position="356"/>
    </location>
</feature>
<feature type="binding site" evidence="1">
    <location>
        <position position="270"/>
    </location>
    <ligand>
        <name>Mn(2+)</name>
        <dbReference type="ChEBI" id="CHEBI:29035"/>
        <label>2</label>
    </ligand>
</feature>
<feature type="binding site" evidence="1">
    <location>
        <position position="275"/>
    </location>
    <ligand>
        <name>Mn(2+)</name>
        <dbReference type="ChEBI" id="CHEBI:29035"/>
        <label>1</label>
    </ligand>
</feature>
<feature type="binding site" evidence="1">
    <location>
        <position position="275"/>
    </location>
    <ligand>
        <name>Mn(2+)</name>
        <dbReference type="ChEBI" id="CHEBI:29035"/>
        <label>2</label>
    </ligand>
</feature>
<feature type="binding site" evidence="1">
    <location>
        <position position="293"/>
    </location>
    <ligand>
        <name>Mn(2+)</name>
        <dbReference type="ChEBI" id="CHEBI:29035"/>
        <label>2</label>
    </ligand>
</feature>
<feature type="binding site" evidence="1">
    <location>
        <position position="352"/>
    </location>
    <ligand>
        <name>Mn(2+)</name>
        <dbReference type="ChEBI" id="CHEBI:29035"/>
        <label>1</label>
    </ligand>
</feature>
<feature type="binding site" evidence="1">
    <location>
        <position position="354"/>
    </location>
    <ligand>
        <name>Mn(2+)</name>
        <dbReference type="ChEBI" id="CHEBI:29035"/>
        <label>1</label>
    </ligand>
</feature>
<feature type="binding site" evidence="1">
    <location>
        <position position="354"/>
    </location>
    <ligand>
        <name>Mn(2+)</name>
        <dbReference type="ChEBI" id="CHEBI:29035"/>
        <label>2</label>
    </ligand>
</feature>
<gene>
    <name evidence="1" type="primary">pepA</name>
    <name type="ordered locus">EcolC_3752</name>
</gene>